<gene>
    <name evidence="1" type="primary">cobS</name>
    <name type="ordered locus">ECP_1990</name>
</gene>
<dbReference type="EC" id="2.7.8.26" evidence="1"/>
<dbReference type="EMBL" id="CP000247">
    <property type="protein sequence ID" value="ABG69989.1"/>
    <property type="molecule type" value="Genomic_DNA"/>
</dbReference>
<dbReference type="RefSeq" id="WP_001296197.1">
    <property type="nucleotide sequence ID" value="NC_008253.1"/>
</dbReference>
<dbReference type="KEGG" id="ecp:ECP_1990"/>
<dbReference type="HOGENOM" id="CLU_057426_1_1_6"/>
<dbReference type="UniPathway" id="UPA00148">
    <property type="reaction ID" value="UER00238"/>
</dbReference>
<dbReference type="Proteomes" id="UP000009182">
    <property type="component" value="Chromosome"/>
</dbReference>
<dbReference type="GO" id="GO:0005886">
    <property type="term" value="C:plasma membrane"/>
    <property type="evidence" value="ECO:0007669"/>
    <property type="project" value="UniProtKB-SubCell"/>
</dbReference>
<dbReference type="GO" id="GO:0051073">
    <property type="term" value="F:adenosylcobinamide-GDP ribazoletransferase activity"/>
    <property type="evidence" value="ECO:0007669"/>
    <property type="project" value="UniProtKB-UniRule"/>
</dbReference>
<dbReference type="GO" id="GO:0008818">
    <property type="term" value="F:cobalamin 5'-phosphate synthase activity"/>
    <property type="evidence" value="ECO:0007669"/>
    <property type="project" value="UniProtKB-UniRule"/>
</dbReference>
<dbReference type="GO" id="GO:0009236">
    <property type="term" value="P:cobalamin biosynthetic process"/>
    <property type="evidence" value="ECO:0007669"/>
    <property type="project" value="UniProtKB-UniRule"/>
</dbReference>
<dbReference type="HAMAP" id="MF_00719">
    <property type="entry name" value="CobS"/>
    <property type="match status" value="1"/>
</dbReference>
<dbReference type="InterPro" id="IPR003805">
    <property type="entry name" value="CobS"/>
</dbReference>
<dbReference type="NCBIfam" id="TIGR00317">
    <property type="entry name" value="cobS"/>
    <property type="match status" value="1"/>
</dbReference>
<dbReference type="PANTHER" id="PTHR34148">
    <property type="entry name" value="ADENOSYLCOBINAMIDE-GDP RIBAZOLETRANSFERASE"/>
    <property type="match status" value="1"/>
</dbReference>
<dbReference type="PANTHER" id="PTHR34148:SF1">
    <property type="entry name" value="ADENOSYLCOBINAMIDE-GDP RIBAZOLETRANSFERASE"/>
    <property type="match status" value="1"/>
</dbReference>
<dbReference type="Pfam" id="PF02654">
    <property type="entry name" value="CobS"/>
    <property type="match status" value="1"/>
</dbReference>
<sequence length="247" mass="26430">MSKLFWAMLSFITRLPVPRRWSQGLDFEHYSRGIITFPLIGLLLGAISGLVFMVLQAWCGVPLAALFSVLVLALMTGGFHLDGLADTCDGVFSARSRDRMLEIMRDSRLGTHGGLALIFVVLAKILVLSELALRGEPILASLAAACAVSRGTAALLMYRHRYAREEGLGNVFIGKIDGRQTCVTLGLAAIFAAVLLPGMHGVAAMVVTMVAIFILGQLLKRTLGGQTGDTLGAAIEFGELVFLLALL</sequence>
<reference key="1">
    <citation type="journal article" date="2006" name="Mol. Microbiol.">
        <title>Role of pathogenicity island-associated integrases in the genome plasticity of uropathogenic Escherichia coli strain 536.</title>
        <authorList>
            <person name="Hochhut B."/>
            <person name="Wilde C."/>
            <person name="Balling G."/>
            <person name="Middendorf B."/>
            <person name="Dobrindt U."/>
            <person name="Brzuszkiewicz E."/>
            <person name="Gottschalk G."/>
            <person name="Carniel E."/>
            <person name="Hacker J."/>
        </authorList>
    </citation>
    <scope>NUCLEOTIDE SEQUENCE [LARGE SCALE GENOMIC DNA]</scope>
    <source>
        <strain>536 / UPEC</strain>
    </source>
</reference>
<keyword id="KW-0997">Cell inner membrane</keyword>
<keyword id="KW-1003">Cell membrane</keyword>
<keyword id="KW-0169">Cobalamin biosynthesis</keyword>
<keyword id="KW-0460">Magnesium</keyword>
<keyword id="KW-0472">Membrane</keyword>
<keyword id="KW-0808">Transferase</keyword>
<keyword id="KW-0812">Transmembrane</keyword>
<keyword id="KW-1133">Transmembrane helix</keyword>
<name>COBS_ECOL5</name>
<accession>Q0TGE0</accession>
<protein>
    <recommendedName>
        <fullName evidence="1">Adenosylcobinamide-GDP ribazoletransferase</fullName>
        <ecNumber evidence="1">2.7.8.26</ecNumber>
    </recommendedName>
    <alternativeName>
        <fullName evidence="1">Cobalamin synthase</fullName>
    </alternativeName>
    <alternativeName>
        <fullName evidence="1">Cobalamin-5'-phosphate synthase</fullName>
    </alternativeName>
</protein>
<organism>
    <name type="scientific">Escherichia coli O6:K15:H31 (strain 536 / UPEC)</name>
    <dbReference type="NCBI Taxonomy" id="362663"/>
    <lineage>
        <taxon>Bacteria</taxon>
        <taxon>Pseudomonadati</taxon>
        <taxon>Pseudomonadota</taxon>
        <taxon>Gammaproteobacteria</taxon>
        <taxon>Enterobacterales</taxon>
        <taxon>Enterobacteriaceae</taxon>
        <taxon>Escherichia</taxon>
    </lineage>
</organism>
<feature type="chain" id="PRO_1000045768" description="Adenosylcobinamide-GDP ribazoletransferase">
    <location>
        <begin position="1"/>
        <end position="247"/>
    </location>
</feature>
<feature type="transmembrane region" description="Helical" evidence="1">
    <location>
        <begin position="34"/>
        <end position="54"/>
    </location>
</feature>
<feature type="transmembrane region" description="Helical" evidence="1">
    <location>
        <begin position="59"/>
        <end position="79"/>
    </location>
</feature>
<feature type="transmembrane region" description="Helical" evidence="1">
    <location>
        <begin position="113"/>
        <end position="133"/>
    </location>
</feature>
<feature type="transmembrane region" description="Helical" evidence="1">
    <location>
        <begin position="138"/>
        <end position="158"/>
    </location>
</feature>
<feature type="transmembrane region" description="Helical" evidence="1">
    <location>
        <begin position="194"/>
        <end position="214"/>
    </location>
</feature>
<evidence type="ECO:0000255" key="1">
    <source>
        <dbReference type="HAMAP-Rule" id="MF_00719"/>
    </source>
</evidence>
<proteinExistence type="inferred from homology"/>
<comment type="function">
    <text evidence="1">Joins adenosylcobinamide-GDP and alpha-ribazole to generate adenosylcobalamin (Ado-cobalamin). Also synthesizes adenosylcobalamin 5'-phosphate from adenosylcobinamide-GDP and alpha-ribazole 5'-phosphate.</text>
</comment>
<comment type="catalytic activity">
    <reaction evidence="1">
        <text>alpha-ribazole + adenosylcob(III)inamide-GDP = adenosylcob(III)alamin + GMP + H(+)</text>
        <dbReference type="Rhea" id="RHEA:16049"/>
        <dbReference type="ChEBI" id="CHEBI:10329"/>
        <dbReference type="ChEBI" id="CHEBI:15378"/>
        <dbReference type="ChEBI" id="CHEBI:18408"/>
        <dbReference type="ChEBI" id="CHEBI:58115"/>
        <dbReference type="ChEBI" id="CHEBI:60487"/>
        <dbReference type="EC" id="2.7.8.26"/>
    </reaction>
</comment>
<comment type="catalytic activity">
    <reaction evidence="1">
        <text>alpha-ribazole 5'-phosphate + adenosylcob(III)inamide-GDP = adenosylcob(III)alamin 5'-phosphate + GMP + H(+)</text>
        <dbReference type="Rhea" id="RHEA:23560"/>
        <dbReference type="ChEBI" id="CHEBI:15378"/>
        <dbReference type="ChEBI" id="CHEBI:57918"/>
        <dbReference type="ChEBI" id="CHEBI:58115"/>
        <dbReference type="ChEBI" id="CHEBI:60487"/>
        <dbReference type="ChEBI" id="CHEBI:60493"/>
        <dbReference type="EC" id="2.7.8.26"/>
    </reaction>
</comment>
<comment type="cofactor">
    <cofactor evidence="1">
        <name>Mg(2+)</name>
        <dbReference type="ChEBI" id="CHEBI:18420"/>
    </cofactor>
</comment>
<comment type="pathway">
    <text evidence="1">Cofactor biosynthesis; adenosylcobalamin biosynthesis; adenosylcobalamin from cob(II)yrinate a,c-diamide: step 7/7.</text>
</comment>
<comment type="subcellular location">
    <subcellularLocation>
        <location evidence="1">Cell inner membrane</location>
        <topology evidence="1">Multi-pass membrane protein</topology>
    </subcellularLocation>
</comment>
<comment type="similarity">
    <text evidence="1">Belongs to the CobS family.</text>
</comment>